<organism>
    <name type="scientific">Notophthalmus viridescens</name>
    <name type="common">Eastern newt</name>
    <name type="synonym">Triturus viridescens</name>
    <dbReference type="NCBI Taxonomy" id="8316"/>
    <lineage>
        <taxon>Eukaryota</taxon>
        <taxon>Metazoa</taxon>
        <taxon>Chordata</taxon>
        <taxon>Craniata</taxon>
        <taxon>Vertebrata</taxon>
        <taxon>Euteleostomi</taxon>
        <taxon>Amphibia</taxon>
        <taxon>Batrachia</taxon>
        <taxon>Caudata</taxon>
        <taxon>Salamandroidea</taxon>
        <taxon>Salamandridae</taxon>
        <taxon>Pleurodelinae</taxon>
        <taxon>Notophthalmus</taxon>
    </lineage>
</organism>
<name>RARB_NOTVI</name>
<feature type="chain" id="PRO_0000053471" description="Retinoic acid receptor beta">
    <location>
        <begin position="1" status="less than"/>
        <end position="158" status="greater than"/>
    </location>
</feature>
<feature type="domain" description="NR LBD" evidence="3">
    <location>
        <begin position="129"/>
        <end position="158" status="greater than"/>
    </location>
</feature>
<feature type="DNA-binding region" description="Nuclear receptor" evidence="2">
    <location>
        <begin position="31"/>
        <end position="106"/>
    </location>
</feature>
<feature type="zinc finger region" description="NR C4-type" evidence="2">
    <location>
        <begin position="34"/>
        <end position="54"/>
    </location>
</feature>
<feature type="zinc finger region" description="NR C4-type" evidence="2">
    <location>
        <begin position="70"/>
        <end position="94"/>
    </location>
</feature>
<feature type="region of interest" description="Disordered" evidence="4">
    <location>
        <begin position="1"/>
        <end position="24"/>
    </location>
</feature>
<feature type="compositionally biased region" description="Low complexity" evidence="4">
    <location>
        <begin position="1"/>
        <end position="18"/>
    </location>
</feature>
<feature type="non-terminal residue">
    <location>
        <position position="1"/>
    </location>
</feature>
<feature type="non-terminal residue">
    <location>
        <position position="158"/>
    </location>
</feature>
<keyword id="KW-0238">DNA-binding</keyword>
<keyword id="KW-0479">Metal-binding</keyword>
<keyword id="KW-0539">Nucleus</keyword>
<keyword id="KW-0675">Receptor</keyword>
<keyword id="KW-0804">Transcription</keyword>
<keyword id="KW-0805">Transcription regulation</keyword>
<keyword id="KW-0862">Zinc</keyword>
<keyword id="KW-0863">Zinc-finger</keyword>
<sequence>RHSAQSIETQSTSSEELVPSPPSPLPPPRVYKPCFVCQDKSSGYHYGVSACEGCKGFFRRSIQKNMIYTCHRDKNCVINKVTRNRCQYCRLQRCFEVGMSKESVRNDRNKKKKEPIKQECIESLEMTAELDDLTEKIRKAHQETFPSLCQLGKYTTNS</sequence>
<dbReference type="PIR" id="S02758">
    <property type="entry name" value="S02758"/>
</dbReference>
<dbReference type="SMR" id="P18515"/>
<dbReference type="GO" id="GO:0005634">
    <property type="term" value="C:nucleus"/>
    <property type="evidence" value="ECO:0007669"/>
    <property type="project" value="UniProtKB-SubCell"/>
</dbReference>
<dbReference type="GO" id="GO:0005667">
    <property type="term" value="C:transcription regulator complex"/>
    <property type="evidence" value="ECO:0007669"/>
    <property type="project" value="TreeGrafter"/>
</dbReference>
<dbReference type="GO" id="GO:0035259">
    <property type="term" value="F:nuclear glucocorticoid receptor binding"/>
    <property type="evidence" value="ECO:0007669"/>
    <property type="project" value="TreeGrafter"/>
</dbReference>
<dbReference type="GO" id="GO:0004879">
    <property type="term" value="F:nuclear receptor activity"/>
    <property type="evidence" value="ECO:0007669"/>
    <property type="project" value="InterPro"/>
</dbReference>
<dbReference type="GO" id="GO:0000978">
    <property type="term" value="F:RNA polymerase II cis-regulatory region sequence-specific DNA binding"/>
    <property type="evidence" value="ECO:0007669"/>
    <property type="project" value="TreeGrafter"/>
</dbReference>
<dbReference type="GO" id="GO:0008270">
    <property type="term" value="F:zinc ion binding"/>
    <property type="evidence" value="ECO:0007669"/>
    <property type="project" value="UniProtKB-KW"/>
</dbReference>
<dbReference type="GO" id="GO:0071376">
    <property type="term" value="P:cellular response to corticotropin-releasing hormone stimulus"/>
    <property type="evidence" value="ECO:0007669"/>
    <property type="project" value="TreeGrafter"/>
</dbReference>
<dbReference type="GO" id="GO:0048384">
    <property type="term" value="P:retinoic acid receptor signaling pathway"/>
    <property type="evidence" value="ECO:0007669"/>
    <property type="project" value="InterPro"/>
</dbReference>
<dbReference type="CDD" id="cd06964">
    <property type="entry name" value="NR_DBD_RAR"/>
    <property type="match status" value="1"/>
</dbReference>
<dbReference type="FunFam" id="3.30.50.10:FF:000004">
    <property type="entry name" value="Retinoic acid receptor beta isoform"/>
    <property type="match status" value="1"/>
</dbReference>
<dbReference type="Gene3D" id="3.30.50.10">
    <property type="entry name" value="Erythroid Transcription Factor GATA-1, subunit A"/>
    <property type="match status" value="1"/>
</dbReference>
<dbReference type="InterPro" id="IPR047159">
    <property type="entry name" value="NR_DBD_RAR"/>
</dbReference>
<dbReference type="InterPro" id="IPR000536">
    <property type="entry name" value="Nucl_hrmn_rcpt_lig-bd"/>
</dbReference>
<dbReference type="InterPro" id="IPR003078">
    <property type="entry name" value="Retinoic_acid_rcpt"/>
</dbReference>
<dbReference type="InterPro" id="IPR001628">
    <property type="entry name" value="Znf_hrmn_rcpt"/>
</dbReference>
<dbReference type="InterPro" id="IPR013088">
    <property type="entry name" value="Znf_NHR/GATA"/>
</dbReference>
<dbReference type="PANTHER" id="PTHR24085">
    <property type="entry name" value="NUCLEAR HORMONE RECEPTOR"/>
    <property type="match status" value="1"/>
</dbReference>
<dbReference type="PANTHER" id="PTHR24085:SF5">
    <property type="entry name" value="RETINOIC ACID RECEPTOR BETA"/>
    <property type="match status" value="1"/>
</dbReference>
<dbReference type="Pfam" id="PF00105">
    <property type="entry name" value="zf-C4"/>
    <property type="match status" value="1"/>
</dbReference>
<dbReference type="PRINTS" id="PR01292">
    <property type="entry name" value="RETNOICACIDR"/>
</dbReference>
<dbReference type="PRINTS" id="PR00047">
    <property type="entry name" value="STROIDFINGER"/>
</dbReference>
<dbReference type="SMART" id="SM00399">
    <property type="entry name" value="ZnF_C4"/>
    <property type="match status" value="1"/>
</dbReference>
<dbReference type="SUPFAM" id="SSF57716">
    <property type="entry name" value="Glucocorticoid receptor-like (DNA-binding domain)"/>
    <property type="match status" value="1"/>
</dbReference>
<dbReference type="PROSITE" id="PS51843">
    <property type="entry name" value="NR_LBD"/>
    <property type="match status" value="1"/>
</dbReference>
<dbReference type="PROSITE" id="PS00031">
    <property type="entry name" value="NUCLEAR_REC_DBD_1"/>
    <property type="match status" value="1"/>
</dbReference>
<dbReference type="PROSITE" id="PS51030">
    <property type="entry name" value="NUCLEAR_REC_DBD_2"/>
    <property type="match status" value="1"/>
</dbReference>
<protein>
    <recommendedName>
        <fullName>Retinoic acid receptor beta</fullName>
        <shortName>RAR-beta</shortName>
    </recommendedName>
    <alternativeName>
        <fullName>Nuclear receptor subfamily 1 group B member 2</fullName>
    </alternativeName>
</protein>
<comment type="function">
    <text evidence="1">Receptor for retinoic acid. Retinoic acid receptors bind as heterodimers to their target response elements in response to their ligands, all-trans or 9-cis retinoic acid, and regulate gene expression in various biological processes. The RAR/RXR heterodimers bind to the retinoic acid response elements (RARE) composed of tandem 5'-AGGTCA-3' sites known as DR1-DR5 (By similarity).</text>
</comment>
<comment type="subunit">
    <text evidence="1">Heterodimer; with a RXR molecule. Binds DNA preferentially as a RAR/RXR heterodimer.</text>
</comment>
<comment type="subcellular location">
    <subcellularLocation>
        <location evidence="2">Nucleus</location>
    </subcellularLocation>
</comment>
<comment type="domain">
    <text>Composed of three domains: a modulating N-terminal domain, a DNA-binding domain and a C-terminal ligand-binding domain.</text>
</comment>
<comment type="similarity">
    <text evidence="5">Belongs to the nuclear hormone receptor family. NR1 subfamily.</text>
</comment>
<reference key="1">
    <citation type="journal article" date="1989" name="Nature">
        <title>Spatial and temporal expression of the retinoic acid receptor in the regenerating amphibian limb.</title>
        <authorList>
            <person name="Giguere V."/>
            <person name="Ong E.S."/>
            <person name="Evans R.M."/>
            <person name="Tabin C.J."/>
        </authorList>
    </citation>
    <scope>NUCLEOTIDE SEQUENCE</scope>
</reference>
<evidence type="ECO:0000250" key="1"/>
<evidence type="ECO:0000255" key="2">
    <source>
        <dbReference type="PROSITE-ProRule" id="PRU00407"/>
    </source>
</evidence>
<evidence type="ECO:0000255" key="3">
    <source>
        <dbReference type="PROSITE-ProRule" id="PRU01189"/>
    </source>
</evidence>
<evidence type="ECO:0000256" key="4">
    <source>
        <dbReference type="SAM" id="MobiDB-lite"/>
    </source>
</evidence>
<evidence type="ECO:0000305" key="5"/>
<proteinExistence type="inferred from homology"/>
<gene>
    <name type="primary">RARB</name>
    <name type="synonym">NR1B2</name>
</gene>
<accession>P18515</accession>